<comment type="function">
    <text evidence="2">Mediates secretion of glycanase ExsH.</text>
</comment>
<comment type="subunit">
    <text evidence="4">Part of a type I secretion system composed of PrsD and PrsE.</text>
</comment>
<comment type="subcellular location">
    <subcellularLocation>
        <location evidence="3">Cell inner membrane</location>
        <topology evidence="3">Single-pass membrane protein</topology>
    </subcellularLocation>
</comment>
<comment type="similarity">
    <text evidence="3">Belongs to the membrane fusion protein (MFP) (TC 8.A.1) family.</text>
</comment>
<gene>
    <name type="primary">prsE</name>
    <name type="ordered locus">RB1291</name>
    <name type="ORF">SM_b21465</name>
</gene>
<dbReference type="EMBL" id="U89163">
    <property type="protein sequence ID" value="AAB64092.1"/>
    <property type="molecule type" value="Genomic_DNA"/>
</dbReference>
<dbReference type="EMBL" id="AL591985">
    <property type="protein sequence ID" value="CAC49691.1"/>
    <property type="molecule type" value="Genomic_DNA"/>
</dbReference>
<dbReference type="PIR" id="C96003">
    <property type="entry name" value="C96003"/>
</dbReference>
<dbReference type="RefSeq" id="NP_437831.1">
    <property type="nucleotide sequence ID" value="NC_003078.1"/>
</dbReference>
<dbReference type="RefSeq" id="WP_010976110.1">
    <property type="nucleotide sequence ID" value="NC_003078.1"/>
</dbReference>
<dbReference type="SMR" id="Q7ANN5"/>
<dbReference type="EnsemblBacteria" id="CAC49691">
    <property type="protein sequence ID" value="CAC49691"/>
    <property type="gene ID" value="SM_b21465"/>
</dbReference>
<dbReference type="KEGG" id="sme:SM_b21465"/>
<dbReference type="PATRIC" id="fig|266834.11.peg.6214"/>
<dbReference type="eggNOG" id="COG0845">
    <property type="taxonomic scope" value="Bacteria"/>
</dbReference>
<dbReference type="HOGENOM" id="CLU_023976_1_1_5"/>
<dbReference type="OrthoDB" id="9810980at2"/>
<dbReference type="Proteomes" id="UP000001976">
    <property type="component" value="Plasmid pSymB"/>
</dbReference>
<dbReference type="GO" id="GO:0005886">
    <property type="term" value="C:plasma membrane"/>
    <property type="evidence" value="ECO:0007669"/>
    <property type="project" value="UniProtKB-SubCell"/>
</dbReference>
<dbReference type="GO" id="GO:0015031">
    <property type="term" value="P:protein transport"/>
    <property type="evidence" value="ECO:0007669"/>
    <property type="project" value="InterPro"/>
</dbReference>
<dbReference type="GO" id="GO:0055085">
    <property type="term" value="P:transmembrane transport"/>
    <property type="evidence" value="ECO:0007669"/>
    <property type="project" value="InterPro"/>
</dbReference>
<dbReference type="Gene3D" id="2.40.30.170">
    <property type="match status" value="1"/>
</dbReference>
<dbReference type="Gene3D" id="2.40.50.100">
    <property type="match status" value="1"/>
</dbReference>
<dbReference type="InterPro" id="IPR050739">
    <property type="entry name" value="MFP"/>
</dbReference>
<dbReference type="InterPro" id="IPR010129">
    <property type="entry name" value="T1SS_HlyD"/>
</dbReference>
<dbReference type="NCBIfam" id="TIGR01843">
    <property type="entry name" value="type_I_hlyD"/>
    <property type="match status" value="1"/>
</dbReference>
<dbReference type="PANTHER" id="PTHR30386:SF17">
    <property type="entry name" value="ALKALINE PROTEASE SECRETION PROTEIN APRE"/>
    <property type="match status" value="1"/>
</dbReference>
<dbReference type="PANTHER" id="PTHR30386">
    <property type="entry name" value="MEMBRANE FUSION SUBUNIT OF EMRAB-TOLC MULTIDRUG EFFLUX PUMP"/>
    <property type="match status" value="1"/>
</dbReference>
<dbReference type="Pfam" id="PF13437">
    <property type="entry name" value="HlyD_3"/>
    <property type="match status" value="1"/>
</dbReference>
<dbReference type="PRINTS" id="PR01490">
    <property type="entry name" value="RTXTOXIND"/>
</dbReference>
<dbReference type="SUPFAM" id="SSF111369">
    <property type="entry name" value="HlyD-like secretion proteins"/>
    <property type="match status" value="1"/>
</dbReference>
<accession>Q7ANN5</accession>
<accession>O33679</accession>
<feature type="chain" id="PRO_0000415268" description="Type I secretion system membrane fusion protein PrsE">
    <location>
        <begin position="1"/>
        <end position="439"/>
    </location>
</feature>
<feature type="transmembrane region" description="Helical" evidence="1">
    <location>
        <begin position="20"/>
        <end position="40"/>
    </location>
</feature>
<protein>
    <recommendedName>
        <fullName>Type I secretion system membrane fusion protein PrsE</fullName>
    </recommendedName>
</protein>
<keyword id="KW-0997">Cell inner membrane</keyword>
<keyword id="KW-1003">Cell membrane</keyword>
<keyword id="KW-0472">Membrane</keyword>
<keyword id="KW-0614">Plasmid</keyword>
<keyword id="KW-1185">Reference proteome</keyword>
<keyword id="KW-0812">Transmembrane</keyword>
<keyword id="KW-1133">Transmembrane helix</keyword>
<keyword id="KW-0813">Transport</keyword>
<name>PRSE_RHIME</name>
<evidence type="ECO:0000255" key="1"/>
<evidence type="ECO:0000269" key="2">
    <source>
    </source>
</evidence>
<evidence type="ECO:0000305" key="3"/>
<evidence type="ECO:0000305" key="4">
    <source>
    </source>
</evidence>
<geneLocation type="plasmid">
    <name>pSymB</name>
    <name>megaplasmid 2</name>
</geneLocation>
<reference key="1">
    <citation type="journal article" date="1997" name="Mol. Microbiol.">
        <title>The Rhizobium meliloti exoK gene and prsD/prsE/exsH genes encode components of independent degradative pathways which contribute to production of low-molecular-weight succinoglycan.</title>
        <authorList>
            <person name="York G.M."/>
            <person name="Walker G.C."/>
        </authorList>
    </citation>
    <scope>NUCLEOTIDE SEQUENCE [GENOMIC DNA]</scope>
    <scope>FUNCTION</scope>
    <scope>SUBUNIT</scope>
    <source>
        <strain>1021</strain>
    </source>
</reference>
<reference key="2">
    <citation type="journal article" date="2001" name="Proc. Natl. Acad. Sci. U.S.A.">
        <title>The complete sequence of the 1,683-kb pSymB megaplasmid from the N2-fixing endosymbiont Sinorhizobium meliloti.</title>
        <authorList>
            <person name="Finan T.M."/>
            <person name="Weidner S."/>
            <person name="Wong K."/>
            <person name="Buhrmester J."/>
            <person name="Chain P."/>
            <person name="Vorhoelter F.J."/>
            <person name="Hernandez-Lucas I."/>
            <person name="Becker A."/>
            <person name="Cowie A."/>
            <person name="Gouzy J."/>
            <person name="Golding B."/>
            <person name="Puehler A."/>
        </authorList>
    </citation>
    <scope>NUCLEOTIDE SEQUENCE [LARGE SCALE GENOMIC DNA]</scope>
    <source>
        <strain>1021</strain>
    </source>
</reference>
<reference key="3">
    <citation type="journal article" date="2001" name="Science">
        <title>The composite genome of the legume symbiont Sinorhizobium meliloti.</title>
        <authorList>
            <person name="Galibert F."/>
            <person name="Finan T.M."/>
            <person name="Long S.R."/>
            <person name="Puehler A."/>
            <person name="Abola P."/>
            <person name="Ampe F."/>
            <person name="Barloy-Hubler F."/>
            <person name="Barnett M.J."/>
            <person name="Becker A."/>
            <person name="Boistard P."/>
            <person name="Bothe G."/>
            <person name="Boutry M."/>
            <person name="Bowser L."/>
            <person name="Buhrmester J."/>
            <person name="Cadieu E."/>
            <person name="Capela D."/>
            <person name="Chain P."/>
            <person name="Cowie A."/>
            <person name="Davis R.W."/>
            <person name="Dreano S."/>
            <person name="Federspiel N.A."/>
            <person name="Fisher R.F."/>
            <person name="Gloux S."/>
            <person name="Godrie T."/>
            <person name="Goffeau A."/>
            <person name="Golding B."/>
            <person name="Gouzy J."/>
            <person name="Gurjal M."/>
            <person name="Hernandez-Lucas I."/>
            <person name="Hong A."/>
            <person name="Huizar L."/>
            <person name="Hyman R.W."/>
            <person name="Jones T."/>
            <person name="Kahn D."/>
            <person name="Kahn M.L."/>
            <person name="Kalman S."/>
            <person name="Keating D.H."/>
            <person name="Kiss E."/>
            <person name="Komp C."/>
            <person name="Lelaure V."/>
            <person name="Masuy D."/>
            <person name="Palm C."/>
            <person name="Peck M.C."/>
            <person name="Pohl T.M."/>
            <person name="Portetelle D."/>
            <person name="Purnelle B."/>
            <person name="Ramsperger U."/>
            <person name="Surzycki R."/>
            <person name="Thebault P."/>
            <person name="Vandenbol M."/>
            <person name="Vorhoelter F.J."/>
            <person name="Weidner S."/>
            <person name="Wells D.H."/>
            <person name="Wong K."/>
            <person name="Yeh K.-C."/>
            <person name="Batut J."/>
        </authorList>
    </citation>
    <scope>NUCLEOTIDE SEQUENCE [LARGE SCALE GENOMIC DNA]</scope>
    <source>
        <strain>1021</strain>
    </source>
</reference>
<organism>
    <name type="scientific">Rhizobium meliloti (strain 1021)</name>
    <name type="common">Ensifer meliloti</name>
    <name type="synonym">Sinorhizobium meliloti</name>
    <dbReference type="NCBI Taxonomy" id="266834"/>
    <lineage>
        <taxon>Bacteria</taxon>
        <taxon>Pseudomonadati</taxon>
        <taxon>Pseudomonadota</taxon>
        <taxon>Alphaproteobacteria</taxon>
        <taxon>Hyphomicrobiales</taxon>
        <taxon>Rhizobiaceae</taxon>
        <taxon>Sinorhizobium/Ensifer group</taxon>
        <taxon>Sinorhizobium</taxon>
    </lineage>
</organism>
<proteinExistence type="evidence at protein level"/>
<sequence>MKGWLQQHKPTARRSLSRHLIGVSVLALALVAGVGGWAATTELSSAIVAGGVVIVDDNVKKVQHLTGGIVGELLVKEGDRVEAGQVLIRLDGTTVRANLAIIESTLAQFYARRARLQAERMGAASFEIEEDLAEFIPGTAAAKLIEGEQRLFASRRSALSGMKGQLDSRKAQLADEVEGLTVQLNAIEEALKLIAEELTGVDSLFGQGLVPMQRVTTLKRQRAELEGGRGRHIAARAQARGKSSEIDLQILQLDEDRRSEISKELTDVEAKIAEYEERRTAATDQLRRLDITAPLSGRIYQLAIHTVNGVINPGETLMLVVPEAEDLTVEAKVATHDIDQIRVGQSVEIRFSAFNQRTTPEVEAEVVTVAPDLVTDERTGASYYPLRIRPKAESLAKLKGLSLYPGMPAEVFIKIADRTVISYLTKPLTDQMRHAFRED</sequence>